<sequence length="331" mass="37517">MRPAFAVGLVFAGCCSNVIFLELLARTHPGCGNIVTFAQFLFIAVEGFLFEANLGRKPPAIPIRYYAIMVTMFFTVSVVNNYALNLNIAMPLHMIFRSGSLIANMILGIIILKKRYSMFKYTSIALVSAGIFICTFMSAKQVTVQTGLSDKDGFQAFAWWLLGIAALTFALLMSARMGIFQETLYRQFGKHSKEALFYNHALPLPGFIFLASDIYDHVVLFNKSELYQVPVIGVTMPVMWFYLLMNVVTQYVCIRGVFILTTECTSLTVTLVVTLRKFVSLIFSILYFQNQFTMWHWLGTSFVFIGTLMYTEVWKNLGTTKSELQKDDKKD</sequence>
<organism>
    <name type="scientific">Mus musculus</name>
    <name type="common">Mouse</name>
    <dbReference type="NCBI Taxonomy" id="10090"/>
    <lineage>
        <taxon>Eukaryota</taxon>
        <taxon>Metazoa</taxon>
        <taxon>Chordata</taxon>
        <taxon>Craniata</taxon>
        <taxon>Vertebrata</taxon>
        <taxon>Euteleostomi</taxon>
        <taxon>Mammalia</taxon>
        <taxon>Eutheria</taxon>
        <taxon>Euarchontoglires</taxon>
        <taxon>Glires</taxon>
        <taxon>Rodentia</taxon>
        <taxon>Myomorpha</taxon>
        <taxon>Muroidea</taxon>
        <taxon>Muridae</taxon>
        <taxon>Murinae</taxon>
        <taxon>Mus</taxon>
        <taxon>Mus</taxon>
    </lineage>
</organism>
<reference key="1">
    <citation type="submission" date="2000-04" db="EMBL/GenBank/DDBJ databases">
        <title>Isolation of full-length cDNA clones from mouse brain cDNA library made by oligo-capping method.</title>
        <authorList>
            <person name="Osada N."/>
            <person name="Kusuda J."/>
            <person name="Tanuma R."/>
            <person name="Ito A."/>
            <person name="Hirata M."/>
            <person name="Sugano S."/>
            <person name="Hashimoto K."/>
        </authorList>
    </citation>
    <scope>NUCLEOTIDE SEQUENCE [LARGE SCALE MRNA] (ISOFORM 1)</scope>
    <source>
        <strain>C57BL/6J</strain>
        <tissue>Brain</tissue>
    </source>
</reference>
<reference key="2">
    <citation type="journal article" date="2005" name="Science">
        <title>The transcriptional landscape of the mammalian genome.</title>
        <authorList>
            <person name="Carninci P."/>
            <person name="Kasukawa T."/>
            <person name="Katayama S."/>
            <person name="Gough J."/>
            <person name="Frith M.C."/>
            <person name="Maeda N."/>
            <person name="Oyama R."/>
            <person name="Ravasi T."/>
            <person name="Lenhard B."/>
            <person name="Wells C."/>
            <person name="Kodzius R."/>
            <person name="Shimokawa K."/>
            <person name="Bajic V.B."/>
            <person name="Brenner S.E."/>
            <person name="Batalov S."/>
            <person name="Forrest A.R."/>
            <person name="Zavolan M."/>
            <person name="Davis M.J."/>
            <person name="Wilming L.G."/>
            <person name="Aidinis V."/>
            <person name="Allen J.E."/>
            <person name="Ambesi-Impiombato A."/>
            <person name="Apweiler R."/>
            <person name="Aturaliya R.N."/>
            <person name="Bailey T.L."/>
            <person name="Bansal M."/>
            <person name="Baxter L."/>
            <person name="Beisel K.W."/>
            <person name="Bersano T."/>
            <person name="Bono H."/>
            <person name="Chalk A.M."/>
            <person name="Chiu K.P."/>
            <person name="Choudhary V."/>
            <person name="Christoffels A."/>
            <person name="Clutterbuck D.R."/>
            <person name="Crowe M.L."/>
            <person name="Dalla E."/>
            <person name="Dalrymple B.P."/>
            <person name="de Bono B."/>
            <person name="Della Gatta G."/>
            <person name="di Bernardo D."/>
            <person name="Down T."/>
            <person name="Engstrom P."/>
            <person name="Fagiolini M."/>
            <person name="Faulkner G."/>
            <person name="Fletcher C.F."/>
            <person name="Fukushima T."/>
            <person name="Furuno M."/>
            <person name="Futaki S."/>
            <person name="Gariboldi M."/>
            <person name="Georgii-Hemming P."/>
            <person name="Gingeras T.R."/>
            <person name="Gojobori T."/>
            <person name="Green R.E."/>
            <person name="Gustincich S."/>
            <person name="Harbers M."/>
            <person name="Hayashi Y."/>
            <person name="Hensch T.K."/>
            <person name="Hirokawa N."/>
            <person name="Hill D."/>
            <person name="Huminiecki L."/>
            <person name="Iacono M."/>
            <person name="Ikeo K."/>
            <person name="Iwama A."/>
            <person name="Ishikawa T."/>
            <person name="Jakt M."/>
            <person name="Kanapin A."/>
            <person name="Katoh M."/>
            <person name="Kawasawa Y."/>
            <person name="Kelso J."/>
            <person name="Kitamura H."/>
            <person name="Kitano H."/>
            <person name="Kollias G."/>
            <person name="Krishnan S.P."/>
            <person name="Kruger A."/>
            <person name="Kummerfeld S.K."/>
            <person name="Kurochkin I.V."/>
            <person name="Lareau L.F."/>
            <person name="Lazarevic D."/>
            <person name="Lipovich L."/>
            <person name="Liu J."/>
            <person name="Liuni S."/>
            <person name="McWilliam S."/>
            <person name="Madan Babu M."/>
            <person name="Madera M."/>
            <person name="Marchionni L."/>
            <person name="Matsuda H."/>
            <person name="Matsuzawa S."/>
            <person name="Miki H."/>
            <person name="Mignone F."/>
            <person name="Miyake S."/>
            <person name="Morris K."/>
            <person name="Mottagui-Tabar S."/>
            <person name="Mulder N."/>
            <person name="Nakano N."/>
            <person name="Nakauchi H."/>
            <person name="Ng P."/>
            <person name="Nilsson R."/>
            <person name="Nishiguchi S."/>
            <person name="Nishikawa S."/>
            <person name="Nori F."/>
            <person name="Ohara O."/>
            <person name="Okazaki Y."/>
            <person name="Orlando V."/>
            <person name="Pang K.C."/>
            <person name="Pavan W.J."/>
            <person name="Pavesi G."/>
            <person name="Pesole G."/>
            <person name="Petrovsky N."/>
            <person name="Piazza S."/>
            <person name="Reed J."/>
            <person name="Reid J.F."/>
            <person name="Ring B.Z."/>
            <person name="Ringwald M."/>
            <person name="Rost B."/>
            <person name="Ruan Y."/>
            <person name="Salzberg S.L."/>
            <person name="Sandelin A."/>
            <person name="Schneider C."/>
            <person name="Schoenbach C."/>
            <person name="Sekiguchi K."/>
            <person name="Semple C.A."/>
            <person name="Seno S."/>
            <person name="Sessa L."/>
            <person name="Sheng Y."/>
            <person name="Shibata Y."/>
            <person name="Shimada H."/>
            <person name="Shimada K."/>
            <person name="Silva D."/>
            <person name="Sinclair B."/>
            <person name="Sperling S."/>
            <person name="Stupka E."/>
            <person name="Sugiura K."/>
            <person name="Sultana R."/>
            <person name="Takenaka Y."/>
            <person name="Taki K."/>
            <person name="Tammoja K."/>
            <person name="Tan S.L."/>
            <person name="Tang S."/>
            <person name="Taylor M.S."/>
            <person name="Tegner J."/>
            <person name="Teichmann S.A."/>
            <person name="Ueda H.R."/>
            <person name="van Nimwegen E."/>
            <person name="Verardo R."/>
            <person name="Wei C.L."/>
            <person name="Yagi K."/>
            <person name="Yamanishi H."/>
            <person name="Zabarovsky E."/>
            <person name="Zhu S."/>
            <person name="Zimmer A."/>
            <person name="Hide W."/>
            <person name="Bult C."/>
            <person name="Grimmond S.M."/>
            <person name="Teasdale R.D."/>
            <person name="Liu E.T."/>
            <person name="Brusic V."/>
            <person name="Quackenbush J."/>
            <person name="Wahlestedt C."/>
            <person name="Mattick J.S."/>
            <person name="Hume D.A."/>
            <person name="Kai C."/>
            <person name="Sasaki D."/>
            <person name="Tomaru Y."/>
            <person name="Fukuda S."/>
            <person name="Kanamori-Katayama M."/>
            <person name="Suzuki M."/>
            <person name="Aoki J."/>
            <person name="Arakawa T."/>
            <person name="Iida J."/>
            <person name="Imamura K."/>
            <person name="Itoh M."/>
            <person name="Kato T."/>
            <person name="Kawaji H."/>
            <person name="Kawagashira N."/>
            <person name="Kawashima T."/>
            <person name="Kojima M."/>
            <person name="Kondo S."/>
            <person name="Konno H."/>
            <person name="Nakano K."/>
            <person name="Ninomiya N."/>
            <person name="Nishio T."/>
            <person name="Okada M."/>
            <person name="Plessy C."/>
            <person name="Shibata K."/>
            <person name="Shiraki T."/>
            <person name="Suzuki S."/>
            <person name="Tagami M."/>
            <person name="Waki K."/>
            <person name="Watahiki A."/>
            <person name="Okamura-Oho Y."/>
            <person name="Suzuki H."/>
            <person name="Kawai J."/>
            <person name="Hayashizaki Y."/>
        </authorList>
    </citation>
    <scope>NUCLEOTIDE SEQUENCE [LARGE SCALE MRNA] (ISOFORMS 1 AND 2)</scope>
    <source>
        <strain>C57BL/6J</strain>
        <tissue>Diencephalon</tissue>
        <tissue>Egg</tissue>
        <tissue>Spinal cord</tissue>
        <tissue>Testis</tissue>
        <tissue>Thymus</tissue>
    </source>
</reference>
<reference key="3">
    <citation type="journal article" date="2004" name="Genome Res.">
        <title>The status, quality, and expansion of the NIH full-length cDNA project: the Mammalian Gene Collection (MGC).</title>
        <authorList>
            <consortium name="The MGC Project Team"/>
        </authorList>
    </citation>
    <scope>NUCLEOTIDE SEQUENCE [LARGE SCALE MRNA] (ISOFORM 1)</scope>
    <source>
        <strain>Czech II</strain>
        <tissue>Mammary tumor</tissue>
    </source>
</reference>
<accession>Q8CIA5</accession>
<accession>Q3TQU7</accession>
<accession>Q5U681</accession>
<accession>Q9JJF7</accession>
<dbReference type="EMBL" id="AB041549">
    <property type="protein sequence ID" value="BAA95034.1"/>
    <property type="molecule type" value="mRNA"/>
</dbReference>
<dbReference type="EMBL" id="AK029969">
    <property type="protein sequence ID" value="BAC26707.1"/>
    <property type="molecule type" value="mRNA"/>
</dbReference>
<dbReference type="EMBL" id="AK033913">
    <property type="protein sequence ID" value="BAC28512.1"/>
    <property type="molecule type" value="mRNA"/>
</dbReference>
<dbReference type="EMBL" id="AK042150">
    <property type="protein sequence ID" value="BAC31186.1"/>
    <property type="molecule type" value="mRNA"/>
</dbReference>
<dbReference type="EMBL" id="AK138591">
    <property type="protein sequence ID" value="BAE23707.1"/>
    <property type="molecule type" value="mRNA"/>
</dbReference>
<dbReference type="EMBL" id="AK163299">
    <property type="protein sequence ID" value="BAE37285.1"/>
    <property type="molecule type" value="mRNA"/>
</dbReference>
<dbReference type="EMBL" id="BC033512">
    <property type="protein sequence ID" value="AAH33512.1"/>
    <property type="molecule type" value="mRNA"/>
</dbReference>
<dbReference type="CCDS" id="CCDS19989.1">
    <molecule id="Q8CIA5-1"/>
</dbReference>
<dbReference type="RefSeq" id="NP_067410.1">
    <molecule id="Q8CIA5-1"/>
    <property type="nucleotide sequence ID" value="NM_021435.4"/>
</dbReference>
<dbReference type="SMR" id="Q8CIA5"/>
<dbReference type="FunCoup" id="Q8CIA5">
    <property type="interactions" value="2549"/>
</dbReference>
<dbReference type="STRING" id="10090.ENSMUSP00000019143"/>
<dbReference type="PhosphoSitePlus" id="Q8CIA5"/>
<dbReference type="PaxDb" id="10090-ENSMUSP00000019143"/>
<dbReference type="PeptideAtlas" id="Q8CIA5"/>
<dbReference type="ProteomicsDB" id="256883">
    <molecule id="Q8CIA5-1"/>
</dbReference>
<dbReference type="ProteomicsDB" id="256884">
    <molecule id="Q8CIA5-2"/>
</dbReference>
<dbReference type="Antibodypedia" id="53731">
    <property type="antibodies" value="35 antibodies from 12 providers"/>
</dbReference>
<dbReference type="DNASU" id="58246"/>
<dbReference type="Ensembl" id="ENSMUST00000019143.9">
    <molecule id="Q8CIA5-1"/>
    <property type="protein sequence ID" value="ENSMUSP00000019143.9"/>
    <property type="gene ID" value="ENSMUSG00000018999.15"/>
</dbReference>
<dbReference type="GeneID" id="58246"/>
<dbReference type="KEGG" id="mmu:58246"/>
<dbReference type="UCSC" id="uc009bgw.1">
    <molecule id="Q8CIA5-2"/>
    <property type="organism name" value="mouse"/>
</dbReference>
<dbReference type="UCSC" id="uc009bgx.1">
    <molecule id="Q8CIA5-1"/>
    <property type="organism name" value="mouse"/>
</dbReference>
<dbReference type="AGR" id="MGI:1931249"/>
<dbReference type="CTD" id="84912"/>
<dbReference type="MGI" id="MGI:1931249">
    <property type="gene designation" value="Slc35b4"/>
</dbReference>
<dbReference type="VEuPathDB" id="HostDB:ENSMUSG00000018999"/>
<dbReference type="eggNOG" id="KOG1583">
    <property type="taxonomic scope" value="Eukaryota"/>
</dbReference>
<dbReference type="GeneTree" id="ENSGT00390000002915"/>
<dbReference type="HOGENOM" id="CLU_033007_1_0_1"/>
<dbReference type="InParanoid" id="Q8CIA5"/>
<dbReference type="OMA" id="NPFTGWH"/>
<dbReference type="OrthoDB" id="999962at2759"/>
<dbReference type="PhylomeDB" id="Q8CIA5"/>
<dbReference type="TreeFam" id="TF312926"/>
<dbReference type="Reactome" id="R-MMU-727802">
    <property type="pathway name" value="Transport of nucleotide sugars"/>
</dbReference>
<dbReference type="BioGRID-ORCS" id="58246">
    <property type="hits" value="4 hits in 76 CRISPR screens"/>
</dbReference>
<dbReference type="PRO" id="PR:Q8CIA5"/>
<dbReference type="Proteomes" id="UP000000589">
    <property type="component" value="Chromosome 6"/>
</dbReference>
<dbReference type="RNAct" id="Q8CIA5">
    <property type="molecule type" value="protein"/>
</dbReference>
<dbReference type="Bgee" id="ENSMUSG00000018999">
    <property type="expression patterns" value="Expressed in ear vesicle and 264 other cell types or tissues"/>
</dbReference>
<dbReference type="ExpressionAtlas" id="Q8CIA5">
    <property type="expression patterns" value="baseline and differential"/>
</dbReference>
<dbReference type="GO" id="GO:0005789">
    <property type="term" value="C:endoplasmic reticulum membrane"/>
    <property type="evidence" value="ECO:0007669"/>
    <property type="project" value="UniProtKB-SubCell"/>
</dbReference>
<dbReference type="GO" id="GO:0005794">
    <property type="term" value="C:Golgi apparatus"/>
    <property type="evidence" value="ECO:0000266"/>
    <property type="project" value="MGI"/>
</dbReference>
<dbReference type="GO" id="GO:0005462">
    <property type="term" value="F:UDP-N-acetylglucosamine transmembrane transporter activity"/>
    <property type="evidence" value="ECO:0007669"/>
    <property type="project" value="Ensembl"/>
</dbReference>
<dbReference type="GO" id="GO:0005464">
    <property type="term" value="F:UDP-xylose transmembrane transporter activity"/>
    <property type="evidence" value="ECO:0000266"/>
    <property type="project" value="MGI"/>
</dbReference>
<dbReference type="GO" id="GO:0006111">
    <property type="term" value="P:regulation of gluconeogenesis"/>
    <property type="evidence" value="ECO:0000315"/>
    <property type="project" value="MGI"/>
</dbReference>
<dbReference type="InterPro" id="IPR013657">
    <property type="entry name" value="SCL35B1-4/HUT1"/>
</dbReference>
<dbReference type="PANTHER" id="PTHR10778:SF4">
    <property type="entry name" value="NUCLEOTIDE SUGAR TRANSPORTER SLC35B4"/>
    <property type="match status" value="1"/>
</dbReference>
<dbReference type="PANTHER" id="PTHR10778">
    <property type="entry name" value="SOLUTE CARRIER FAMILY 35 MEMBER B"/>
    <property type="match status" value="1"/>
</dbReference>
<dbReference type="Pfam" id="PF08449">
    <property type="entry name" value="UAA"/>
    <property type="match status" value="1"/>
</dbReference>
<feature type="chain" id="PRO_0000213387" description="Nucleotide sugar transporter SLC35B4">
    <location>
        <begin position="1"/>
        <end position="331"/>
    </location>
</feature>
<feature type="transmembrane region" description="Helical" evidence="2">
    <location>
        <begin position="4"/>
        <end position="24"/>
    </location>
</feature>
<feature type="transmembrane region" description="Helical" evidence="2">
    <location>
        <begin position="30"/>
        <end position="50"/>
    </location>
</feature>
<feature type="transmembrane region" description="Helical" evidence="2">
    <location>
        <begin position="59"/>
        <end position="79"/>
    </location>
</feature>
<feature type="transmembrane region" description="Helical" evidence="2">
    <location>
        <begin position="92"/>
        <end position="112"/>
    </location>
</feature>
<feature type="transmembrane region" description="Helical" evidence="2">
    <location>
        <begin position="124"/>
        <end position="144"/>
    </location>
</feature>
<feature type="transmembrane region" description="Helical" evidence="2">
    <location>
        <begin position="153"/>
        <end position="173"/>
    </location>
</feature>
<feature type="transmembrane region" description="Helical" evidence="2">
    <location>
        <begin position="201"/>
        <end position="221"/>
    </location>
</feature>
<feature type="transmembrane region" description="Helical" evidence="2">
    <location>
        <begin position="229"/>
        <end position="249"/>
    </location>
</feature>
<feature type="transmembrane region" description="Helical" evidence="2">
    <location>
        <begin position="251"/>
        <end position="267"/>
    </location>
</feature>
<feature type="transmembrane region" description="Helical" evidence="2">
    <location>
        <begin position="268"/>
        <end position="288"/>
    </location>
</feature>
<feature type="transmembrane region" description="Helical" evidence="2">
    <location>
        <begin position="294"/>
        <end position="314"/>
    </location>
</feature>
<feature type="short sequence motif" description="Mediates endoplasmic reticulum retention" evidence="1">
    <location>
        <begin position="326"/>
        <end position="331"/>
    </location>
</feature>
<feature type="splice variant" id="VSP_016203" description="In isoform 2." evidence="3">
    <location>
        <begin position="1"/>
        <end position="172"/>
    </location>
</feature>
<feature type="sequence conflict" description="In Ref. 3; AAH33512." evidence="4" ref="3">
    <original>V</original>
    <variation>I</variation>
    <location>
        <position position="238"/>
    </location>
</feature>
<gene>
    <name type="primary">Slc35b4</name>
    <name type="ORF">MNCb-4414</name>
</gene>
<evidence type="ECO:0000250" key="1">
    <source>
        <dbReference type="UniProtKB" id="Q969S0"/>
    </source>
</evidence>
<evidence type="ECO:0000255" key="2"/>
<evidence type="ECO:0000303" key="3">
    <source>
    </source>
</evidence>
<evidence type="ECO:0000305" key="4"/>
<name>S35B4_MOUSE</name>
<proteinExistence type="evidence at transcript level"/>
<keyword id="KW-0025">Alternative splicing</keyword>
<keyword id="KW-0256">Endoplasmic reticulum</keyword>
<keyword id="KW-0472">Membrane</keyword>
<keyword id="KW-1185">Reference proteome</keyword>
<keyword id="KW-0762">Sugar transport</keyword>
<keyword id="KW-0812">Transmembrane</keyword>
<keyword id="KW-1133">Transmembrane helix</keyword>
<keyword id="KW-0813">Transport</keyword>
<comment type="function">
    <text evidence="1">Antiporter that transports nucleotide sugars across the endoplasmic reticulum (ER) membrane in exchange for another nucleotide sugar. May couple UDP-alpha-D-glucuronate (UDP-GlcA) or UDP-alpha-D-xylose (UDP-Xyl) efflux to UDP-alpha-D-glucuronate (UDP-GlcA) influx into the ER lumen, which in turn stimulates glucuronidation and excretion of endobiotics and xenobiotics.</text>
</comment>
<comment type="catalytic activity">
    <reaction evidence="1">
        <text>UDP-N-acetyl-alpha-D-glucosamine(in) + UDP-alpha-D-glucuronate(out) = UDP-N-acetyl-alpha-D-glucosamine(out) + UDP-alpha-D-glucuronate(in)</text>
        <dbReference type="Rhea" id="RHEA:73703"/>
        <dbReference type="ChEBI" id="CHEBI:57705"/>
        <dbReference type="ChEBI" id="CHEBI:58052"/>
    </reaction>
    <physiologicalReaction direction="left-to-right" evidence="1">
        <dbReference type="Rhea" id="RHEA:73704"/>
    </physiologicalReaction>
</comment>
<comment type="catalytic activity">
    <reaction evidence="1">
        <text>UDP-alpha-D-xylose(in) + UDP-alpha-D-glucuronate(out) = UDP-alpha-D-xylose(out) + UDP-alpha-D-glucuronate(in)</text>
        <dbReference type="Rhea" id="RHEA:74831"/>
        <dbReference type="ChEBI" id="CHEBI:57632"/>
        <dbReference type="ChEBI" id="CHEBI:58052"/>
    </reaction>
    <physiologicalReaction direction="left-to-right" evidence="1">
        <dbReference type="Rhea" id="RHEA:74832"/>
    </physiologicalReaction>
</comment>
<comment type="subcellular location">
    <subcellularLocation>
        <location evidence="1">Endoplasmic reticulum membrane</location>
        <topology evidence="2">Multi-pass membrane protein</topology>
    </subcellularLocation>
</comment>
<comment type="alternative products">
    <event type="alternative splicing"/>
    <isoform>
        <id>Q8CIA5-1</id>
        <name>1</name>
        <sequence type="displayed"/>
    </isoform>
    <isoform>
        <id>Q8CIA5-2</id>
        <name>2</name>
        <sequence type="described" ref="VSP_016203"/>
    </isoform>
</comment>
<comment type="similarity">
    <text evidence="4">Belongs to the nucleotide-sugar transporter family. SLC35B subfamily.</text>
</comment>
<protein>
    <recommendedName>
        <fullName>Nucleotide sugar transporter SLC35B4</fullName>
    </recommendedName>
    <alternativeName>
        <fullName>Solute carrier family 35 member B4</fullName>
    </alternativeName>
    <alternativeName>
        <fullName>UDP-xylose and UDP-N-acetylglucosamine transporter</fullName>
    </alternativeName>
</protein>